<comment type="function">
    <text>Involved in bacteriochlorophyll biosynthesis; introduces a magnesium ion into protoporphyrin IX to yield Mg-protoporphyrin IX.</text>
</comment>
<comment type="catalytic activity">
    <reaction>
        <text>protoporphyrin IX + Mg(2+) + ATP + H2O = Mg-protoporphyrin IX + ADP + phosphate + 3 H(+)</text>
        <dbReference type="Rhea" id="RHEA:13961"/>
        <dbReference type="ChEBI" id="CHEBI:15377"/>
        <dbReference type="ChEBI" id="CHEBI:15378"/>
        <dbReference type="ChEBI" id="CHEBI:18420"/>
        <dbReference type="ChEBI" id="CHEBI:30616"/>
        <dbReference type="ChEBI" id="CHEBI:43474"/>
        <dbReference type="ChEBI" id="CHEBI:57306"/>
        <dbReference type="ChEBI" id="CHEBI:60492"/>
        <dbReference type="ChEBI" id="CHEBI:456216"/>
        <dbReference type="EC" id="6.6.1.1"/>
    </reaction>
</comment>
<comment type="pathway">
    <text>Porphyrin-containing compound metabolism; bacteriochlorophyll biosynthesis.</text>
</comment>
<comment type="similarity">
    <text evidence="4">Belongs to the Mg-chelatase subunits D/I family.</text>
</comment>
<feature type="chain" id="PRO_0000206851" description="Magnesium-chelatase 67 kDa subunit">
    <location>
        <begin position="1"/>
        <end position="666"/>
    </location>
</feature>
<feature type="domain" description="VWFA" evidence="2">
    <location>
        <begin position="475"/>
        <end position="661"/>
    </location>
</feature>
<feature type="region of interest" description="Disordered" evidence="3">
    <location>
        <begin position="327"/>
        <end position="367"/>
    </location>
</feature>
<feature type="compositionally biased region" description="Pro residues" evidence="3">
    <location>
        <begin position="335"/>
        <end position="347"/>
    </location>
</feature>
<feature type="binding site" evidence="1">
    <location>
        <begin position="37"/>
        <end position="44"/>
    </location>
    <ligand>
        <name>ATP</name>
        <dbReference type="ChEBI" id="CHEBI:30616"/>
    </ligand>
</feature>
<organism>
    <name type="scientific">Heliobacterium mobile</name>
    <name type="common">Heliobacillus mobilis</name>
    <dbReference type="NCBI Taxonomy" id="28064"/>
    <lineage>
        <taxon>Bacteria</taxon>
        <taxon>Bacillati</taxon>
        <taxon>Bacillota</taxon>
        <taxon>Clostridia</taxon>
        <taxon>Eubacteriales</taxon>
        <taxon>Heliobacteriaceae</taxon>
        <taxon>Heliobacterium</taxon>
    </lineage>
</organism>
<accession>Q9ZGE6</accession>
<evidence type="ECO:0000255" key="1"/>
<evidence type="ECO:0000255" key="2">
    <source>
        <dbReference type="PROSITE-ProRule" id="PRU00219"/>
    </source>
</evidence>
<evidence type="ECO:0000256" key="3">
    <source>
        <dbReference type="SAM" id="MobiDB-lite"/>
    </source>
</evidence>
<evidence type="ECO:0000305" key="4"/>
<protein>
    <recommendedName>
        <fullName>Magnesium-chelatase 67 kDa subunit</fullName>
        <shortName>Mg-chelatase subunit D</shortName>
        <ecNumber>6.6.1.1</ecNumber>
    </recommendedName>
    <alternativeName>
        <fullName>Mg-protoporphyrin IX chelatase</fullName>
    </alternativeName>
</protein>
<proteinExistence type="inferred from homology"/>
<keyword id="KW-0067">ATP-binding</keyword>
<keyword id="KW-0077">Bacteriochlorophyll biosynthesis</keyword>
<keyword id="KW-0149">Chlorophyll biosynthesis</keyword>
<keyword id="KW-0436">Ligase</keyword>
<keyword id="KW-0547">Nucleotide-binding</keyword>
<keyword id="KW-0602">Photosynthesis</keyword>
<gene>
    <name type="primary">bchD</name>
</gene>
<name>BCHD_HELMO</name>
<sequence length="666" mass="72579">MKVNTLPLAAITGQEAVKLALTLAAVDPGLKGVAIAGRRGTGKTVLARGLRHLLPPIDQLEGCPCHCNPAEPHSWCNRCRERFTEESGLSDSEVPVVQRNAPFSEVPLGATEDRLLGAIDVEQSLAGGVRAWQPGLLGEANRGVLYIDQLNLLDDGLVNSLFDAMSGTCRLEREGISVQYPSNFVLIGTYDPDEGGLRGHLADRIAMHVSSGVIVDLEQRLEIMRRQELFSEAPEDFFDLYNDEQEQTLRRIEKARTVLPQVTISEAQTLYLIGQSLKRGVPGHRADLFSVRLAKAHAAWQGRTAVEPIDLAVAVEFVIKPRQTVDLPDEEEQMQPPPPPPPPPPPPEPDKPDDPETPPDEAPKDEQTLQLPEEFFFDAEEVPMEDELLSLQNKVQRQARGGAHGKQKSLERGRYARALLPPPGKNSRVAVDATLRAAAPYQRQRRESGQYGDRQVIVTNSDIRAKQFVRKSGALIIFVVDASGSMAFNRMSSAKGAVSVLLNEAYVNRDKVALIIFRGQQAETLVPPTRSVELAKKRFDQVPVGGGSPLAGAIAQAIEVGVNSIGSDVGQVIITLITDGRGNVPMDPQAGPKNREQLNEEILALSRLVPENGFSMLVIDTANKFTSTGFAKKIADAAFAQYYYLPKMTAASLAETVKSGVHALRK</sequence>
<dbReference type="EC" id="6.6.1.1"/>
<dbReference type="EMBL" id="AF080002">
    <property type="protein sequence ID" value="AAC84032.1"/>
    <property type="molecule type" value="Genomic_DNA"/>
</dbReference>
<dbReference type="PIR" id="T31461">
    <property type="entry name" value="T31461"/>
</dbReference>
<dbReference type="RefSeq" id="WP_155475597.1">
    <property type="nucleotide sequence ID" value="NZ_WNKU01000004.1"/>
</dbReference>
<dbReference type="SMR" id="Q9ZGE6"/>
<dbReference type="OrthoDB" id="9775079at2"/>
<dbReference type="UniPathway" id="UPA00669"/>
<dbReference type="GO" id="GO:0005524">
    <property type="term" value="F:ATP binding"/>
    <property type="evidence" value="ECO:0007669"/>
    <property type="project" value="UniProtKB-KW"/>
</dbReference>
<dbReference type="GO" id="GO:0016851">
    <property type="term" value="F:magnesium chelatase activity"/>
    <property type="evidence" value="ECO:0007669"/>
    <property type="project" value="UniProtKB-EC"/>
</dbReference>
<dbReference type="GO" id="GO:0030494">
    <property type="term" value="P:bacteriochlorophyll biosynthetic process"/>
    <property type="evidence" value="ECO:0007669"/>
    <property type="project" value="UniProtKB-UniPathway"/>
</dbReference>
<dbReference type="GO" id="GO:0015979">
    <property type="term" value="P:photosynthesis"/>
    <property type="evidence" value="ECO:0007669"/>
    <property type="project" value="UniProtKB-KW"/>
</dbReference>
<dbReference type="CDD" id="cd01451">
    <property type="entry name" value="vWA_Magnesium_chelatase"/>
    <property type="match status" value="1"/>
</dbReference>
<dbReference type="Gene3D" id="1.10.8.80">
    <property type="entry name" value="Magnesium chelatase subunit I, C-Terminal domain"/>
    <property type="match status" value="1"/>
</dbReference>
<dbReference type="Gene3D" id="3.40.50.300">
    <property type="entry name" value="P-loop containing nucleotide triphosphate hydrolases"/>
    <property type="match status" value="1"/>
</dbReference>
<dbReference type="Gene3D" id="3.40.50.410">
    <property type="entry name" value="von Willebrand factor, type A domain"/>
    <property type="match status" value="1"/>
</dbReference>
<dbReference type="InterPro" id="IPR041702">
    <property type="entry name" value="BchD/ChlD_VWA"/>
</dbReference>
<dbReference type="InterPro" id="IPR041628">
    <property type="entry name" value="ChlI/MoxR_AAA_lid"/>
</dbReference>
<dbReference type="InterPro" id="IPR011776">
    <property type="entry name" value="Mg_chelatase_ATPase-dsu"/>
</dbReference>
<dbReference type="InterPro" id="IPR000523">
    <property type="entry name" value="Mg_chelatse_chII-like_cat_dom"/>
</dbReference>
<dbReference type="InterPro" id="IPR027417">
    <property type="entry name" value="P-loop_NTPase"/>
</dbReference>
<dbReference type="InterPro" id="IPR002035">
    <property type="entry name" value="VWF_A"/>
</dbReference>
<dbReference type="InterPro" id="IPR036465">
    <property type="entry name" value="vWFA_dom_sf"/>
</dbReference>
<dbReference type="NCBIfam" id="TIGR02031">
    <property type="entry name" value="BchD-ChlD"/>
    <property type="match status" value="1"/>
</dbReference>
<dbReference type="PANTHER" id="PTHR43473">
    <property type="entry name" value="MAGNESIUM-CHELATASE SUBUNIT CHLD, CHLOROPLASTIC"/>
    <property type="match status" value="1"/>
</dbReference>
<dbReference type="PANTHER" id="PTHR43473:SF2">
    <property type="entry name" value="MAGNESIUM-CHELATASE SUBUNIT CHLD, CHLOROPLASTIC"/>
    <property type="match status" value="1"/>
</dbReference>
<dbReference type="Pfam" id="PF17863">
    <property type="entry name" value="AAA_lid_2"/>
    <property type="match status" value="1"/>
</dbReference>
<dbReference type="Pfam" id="PF01078">
    <property type="entry name" value="Mg_chelatase"/>
    <property type="match status" value="2"/>
</dbReference>
<dbReference type="Pfam" id="PF13519">
    <property type="entry name" value="VWA_2"/>
    <property type="match status" value="1"/>
</dbReference>
<dbReference type="SMART" id="SM00327">
    <property type="entry name" value="VWA"/>
    <property type="match status" value="1"/>
</dbReference>
<dbReference type="SUPFAM" id="SSF101447">
    <property type="entry name" value="Formin homology 2 domain (FH2 domain)"/>
    <property type="match status" value="1"/>
</dbReference>
<dbReference type="SUPFAM" id="SSF52540">
    <property type="entry name" value="P-loop containing nucleoside triphosphate hydrolases"/>
    <property type="match status" value="1"/>
</dbReference>
<dbReference type="SUPFAM" id="SSF53300">
    <property type="entry name" value="vWA-like"/>
    <property type="match status" value="1"/>
</dbReference>
<dbReference type="PROSITE" id="PS50234">
    <property type="entry name" value="VWFA"/>
    <property type="match status" value="1"/>
</dbReference>
<reference key="1">
    <citation type="journal article" date="1998" name="Proc. Natl. Acad. Sci. U.S.A.">
        <title>Tracking molecular evolution of photosynthesis by characterization of a major photosynthesis gene cluster from Heliobacillus mobilis.</title>
        <authorList>
            <person name="Xiong J."/>
            <person name="Inoue K."/>
            <person name="Bauer C.E."/>
        </authorList>
    </citation>
    <scope>NUCLEOTIDE SEQUENCE [GENOMIC DNA]</scope>
</reference>